<gene>
    <name type="primary">STS1</name>
    <name type="synonym">DBF8</name>
    <name type="synonym">SSM5</name>
    <name type="ORF">C1Q_00319</name>
</gene>
<name>STS1_YEAS2</name>
<organism>
    <name type="scientific">Saccharomyces cerevisiae (strain JAY291)</name>
    <name type="common">Baker's yeast</name>
    <dbReference type="NCBI Taxonomy" id="574961"/>
    <lineage>
        <taxon>Eukaryota</taxon>
        <taxon>Fungi</taxon>
        <taxon>Dikarya</taxon>
        <taxon>Ascomycota</taxon>
        <taxon>Saccharomycotina</taxon>
        <taxon>Saccharomycetes</taxon>
        <taxon>Saccharomycetales</taxon>
        <taxon>Saccharomycetaceae</taxon>
        <taxon>Saccharomyces</taxon>
    </lineage>
</organism>
<reference key="1">
    <citation type="journal article" date="2009" name="Genome Res.">
        <title>Genome structure of a Saccharomyces cerevisiae strain widely used in bioethanol production.</title>
        <authorList>
            <person name="Argueso J.L."/>
            <person name="Carazzolle M.F."/>
            <person name="Mieczkowski P.A."/>
            <person name="Duarte F.M."/>
            <person name="Netto O.V.C."/>
            <person name="Missawa S.K."/>
            <person name="Galzerani F."/>
            <person name="Costa G.G.L."/>
            <person name="Vidal R.O."/>
            <person name="Noronha M.F."/>
            <person name="Dominska M."/>
            <person name="Andrietta M.G.S."/>
            <person name="Andrietta S.R."/>
            <person name="Cunha A.F."/>
            <person name="Gomes L.H."/>
            <person name="Tavares F.C.A."/>
            <person name="Alcarde A.R."/>
            <person name="Dietrich F.S."/>
            <person name="McCusker J.H."/>
            <person name="Petes T.D."/>
            <person name="Pereira G.A.G."/>
        </authorList>
    </citation>
    <scope>NUCLEOTIDE SEQUENCE [LARGE SCALE GENOMIC DNA]</scope>
    <source>
        <strain>JAY291</strain>
    </source>
</reference>
<proteinExistence type="inferred from homology"/>
<keyword id="KW-0963">Cytoplasm</keyword>
<keyword id="KW-0539">Nucleus</keyword>
<keyword id="KW-0653">Protein transport</keyword>
<keyword id="KW-0813">Transport</keyword>
<dbReference type="EMBL" id="ACFL01000009">
    <property type="protein sequence ID" value="EEU09045.1"/>
    <property type="molecule type" value="Genomic_DNA"/>
</dbReference>
<dbReference type="SMR" id="C7GJG1"/>
<dbReference type="Proteomes" id="UP000008073">
    <property type="component" value="Unassembled WGS sequence"/>
</dbReference>
<dbReference type="GO" id="GO:0005737">
    <property type="term" value="C:cytoplasm"/>
    <property type="evidence" value="ECO:0007669"/>
    <property type="project" value="UniProtKB-SubCell"/>
</dbReference>
<dbReference type="GO" id="GO:0031965">
    <property type="term" value="C:nuclear membrane"/>
    <property type="evidence" value="ECO:0007669"/>
    <property type="project" value="TreeGrafter"/>
</dbReference>
<dbReference type="GO" id="GO:0070628">
    <property type="term" value="F:proteasome binding"/>
    <property type="evidence" value="ECO:0007669"/>
    <property type="project" value="TreeGrafter"/>
</dbReference>
<dbReference type="GO" id="GO:0071630">
    <property type="term" value="P:nuclear protein quality control by the ubiquitin-proteasome system"/>
    <property type="evidence" value="ECO:0007669"/>
    <property type="project" value="InterPro"/>
</dbReference>
<dbReference type="GO" id="GO:0031144">
    <property type="term" value="P:proteasome localization"/>
    <property type="evidence" value="ECO:0007669"/>
    <property type="project" value="InterPro"/>
</dbReference>
<dbReference type="GO" id="GO:0015031">
    <property type="term" value="P:protein transport"/>
    <property type="evidence" value="ECO:0007669"/>
    <property type="project" value="UniProtKB-KW"/>
</dbReference>
<dbReference type="FunFam" id="1.20.58.1590:FF:000003">
    <property type="entry name" value="Tethering factor for nuclear proteasome STS1"/>
    <property type="match status" value="1"/>
</dbReference>
<dbReference type="Gene3D" id="1.20.58.1590">
    <property type="entry name" value="Tethering factor for nuclear proteasome Cut8/Sts1"/>
    <property type="match status" value="1"/>
</dbReference>
<dbReference type="InterPro" id="IPR013868">
    <property type="entry name" value="Cut8/Sts1_fam"/>
</dbReference>
<dbReference type="InterPro" id="IPR038422">
    <property type="entry name" value="Cut8/Sts1_sf"/>
</dbReference>
<dbReference type="PANTHER" id="PTHR28032">
    <property type="entry name" value="FI02826P"/>
    <property type="match status" value="1"/>
</dbReference>
<dbReference type="PANTHER" id="PTHR28032:SF1">
    <property type="entry name" value="FI02826P"/>
    <property type="match status" value="1"/>
</dbReference>
<dbReference type="Pfam" id="PF08559">
    <property type="entry name" value="Cut8"/>
    <property type="match status" value="1"/>
</dbReference>
<evidence type="ECO:0000250" key="1"/>
<evidence type="ECO:0000256" key="2">
    <source>
        <dbReference type="SAM" id="MobiDB-lite"/>
    </source>
</evidence>
<evidence type="ECO:0000305" key="3"/>
<feature type="chain" id="PRO_0000409437" description="Tethering factor for nuclear proteasome STS1">
    <location>
        <begin position="1"/>
        <end position="319"/>
    </location>
</feature>
<feature type="region of interest" description="Disordered" evidence="2">
    <location>
        <begin position="33"/>
        <end position="76"/>
    </location>
</feature>
<comment type="function">
    <text evidence="1">Involved in ubiquitin-mediated protein degradation. Regulatory factor in the ubiquitin/proteasome pathway that controls the turnover of proteasome substrates. Targets proteasomes to the nucleus and facilitates the degradation of nuclear proteins (By similarity).</text>
</comment>
<comment type="subunit">
    <text evidence="1">Binds the proteasome. Interacts with karyopherin SRP1 and Proteasome subunit RPN11.</text>
</comment>
<comment type="subcellular location">
    <subcellularLocation>
        <location evidence="1">Cytoplasm</location>
    </subcellularLocation>
    <subcellularLocation>
        <location evidence="1">Nucleus</location>
    </subcellularLocation>
</comment>
<comment type="similarity">
    <text evidence="3">Belongs to the cut8/STS1 family.</text>
</comment>
<accession>C7GJG1</accession>
<protein>
    <recommendedName>
        <fullName>Tethering factor for nuclear proteasome STS1</fullName>
    </recommendedName>
    <alternativeName>
        <fullName>Dumbbell former protein 8</fullName>
    </alternativeName>
    <alternativeName>
        <fullName>SEC23 suppressor 1</fullName>
    </alternativeName>
</protein>
<sequence length="319" mass="36499">MMGFEWGFKPSSKITQSTVSSQGTGNVMIPTAGVKQKRRYANEEQEEEELPRNKNVMKYGGVSKRRPQPGSLIRGQPLPLQRGMELMNKNQLQQLLVDLMTKHPEIQQSVHTRVIGLDFSIQKCLDMLKQKSEAVYQSIPYNRSYESNKLDDYAFVRMKPQILEFLNCLVDFILDNIPPRLENLHASLKFLDICTELVIKLPRFELASNNYYYDKCIEQLSHVWCTLIEHIARDRIILLADNSSVWKSHMTRLQVYNEHSNGLLERPLQLFKSLDMGSPSAASSSTLSLQESIIYHHDTMTANENNNNSGSAATDSPFN</sequence>